<gene>
    <name evidence="12" type="primary">SLC35C1</name>
    <name evidence="7" type="synonym">FUCT1</name>
</gene>
<reference key="1">
    <citation type="journal article" date="2001" name="Nat. Genet.">
        <title>The gene defective in leukocyte adhesion deficiency II encodes a putative GDP-fucose transporter.</title>
        <authorList>
            <person name="Luehn K."/>
            <person name="Wild M.K."/>
            <person name="Eckhardt M."/>
            <person name="Gerardy-Schahn R."/>
            <person name="Vestweber D."/>
        </authorList>
    </citation>
    <scope>NUCLEOTIDE SEQUENCE [MRNA] (ISOFORM 1)</scope>
    <scope>FUNCTION</scope>
    <scope>VARIANT CDG2C CYS-147</scope>
    <scope>CHARACTERIZATION OF VARIANT CDG2C CYS-147</scope>
    <scope>INVOLVEMENT IN CDG2C</scope>
    <scope>SUBCELLULAR LOCATION</scope>
</reference>
<reference key="2">
    <citation type="journal article" date="2001" name="Nat. Genet.">
        <title>Complementation cloning identifies CDG-IIc, a new type of congenital disorders of glycosylation, as a GDP-fucose transporter deficiency.</title>
        <authorList>
            <person name="Luebke T."/>
            <person name="Marquardt T."/>
            <person name="Etzioni A."/>
            <person name="Hartmann E."/>
            <person name="von Figura K."/>
            <person name="Koerner C."/>
        </authorList>
    </citation>
    <scope>NUCLEOTIDE SEQUENCE [MRNA] (ISOFORM 1)</scope>
    <scope>FUNCTION</scope>
    <scope>VARIANTS CDG2C CYS-147 AND ARG-308</scope>
    <scope>CHARACTERIZATION OF VARIANT CDG2C CYS-147</scope>
    <scope>INVOLVEMENT IN CDG2C</scope>
    <scope>SUBCELLULAR LOCATION</scope>
    <scope>TRANSPORTER ACTIVITY</scope>
</reference>
<reference key="3">
    <citation type="journal article" date="2004" name="Nat. Genet.">
        <title>Complete sequencing and characterization of 21,243 full-length human cDNAs.</title>
        <authorList>
            <person name="Ota T."/>
            <person name="Suzuki Y."/>
            <person name="Nishikawa T."/>
            <person name="Otsuki T."/>
            <person name="Sugiyama T."/>
            <person name="Irie R."/>
            <person name="Wakamatsu A."/>
            <person name="Hayashi K."/>
            <person name="Sato H."/>
            <person name="Nagai K."/>
            <person name="Kimura K."/>
            <person name="Makita H."/>
            <person name="Sekine M."/>
            <person name="Obayashi M."/>
            <person name="Nishi T."/>
            <person name="Shibahara T."/>
            <person name="Tanaka T."/>
            <person name="Ishii S."/>
            <person name="Yamamoto J."/>
            <person name="Saito K."/>
            <person name="Kawai Y."/>
            <person name="Isono Y."/>
            <person name="Nakamura Y."/>
            <person name="Nagahari K."/>
            <person name="Murakami K."/>
            <person name="Yasuda T."/>
            <person name="Iwayanagi T."/>
            <person name="Wagatsuma M."/>
            <person name="Shiratori A."/>
            <person name="Sudo H."/>
            <person name="Hosoiri T."/>
            <person name="Kaku Y."/>
            <person name="Kodaira H."/>
            <person name="Kondo H."/>
            <person name="Sugawara M."/>
            <person name="Takahashi M."/>
            <person name="Kanda K."/>
            <person name="Yokoi T."/>
            <person name="Furuya T."/>
            <person name="Kikkawa E."/>
            <person name="Omura Y."/>
            <person name="Abe K."/>
            <person name="Kamihara K."/>
            <person name="Katsuta N."/>
            <person name="Sato K."/>
            <person name="Tanikawa M."/>
            <person name="Yamazaki M."/>
            <person name="Ninomiya K."/>
            <person name="Ishibashi T."/>
            <person name="Yamashita H."/>
            <person name="Murakawa K."/>
            <person name="Fujimori K."/>
            <person name="Tanai H."/>
            <person name="Kimata M."/>
            <person name="Watanabe M."/>
            <person name="Hiraoka S."/>
            <person name="Chiba Y."/>
            <person name="Ishida S."/>
            <person name="Ono Y."/>
            <person name="Takiguchi S."/>
            <person name="Watanabe S."/>
            <person name="Yosida M."/>
            <person name="Hotuta T."/>
            <person name="Kusano J."/>
            <person name="Kanehori K."/>
            <person name="Takahashi-Fujii A."/>
            <person name="Hara H."/>
            <person name="Tanase T.-O."/>
            <person name="Nomura Y."/>
            <person name="Togiya S."/>
            <person name="Komai F."/>
            <person name="Hara R."/>
            <person name="Takeuchi K."/>
            <person name="Arita M."/>
            <person name="Imose N."/>
            <person name="Musashino K."/>
            <person name="Yuuki H."/>
            <person name="Oshima A."/>
            <person name="Sasaki N."/>
            <person name="Aotsuka S."/>
            <person name="Yoshikawa Y."/>
            <person name="Matsunawa H."/>
            <person name="Ichihara T."/>
            <person name="Shiohata N."/>
            <person name="Sano S."/>
            <person name="Moriya S."/>
            <person name="Momiyama H."/>
            <person name="Satoh N."/>
            <person name="Takami S."/>
            <person name="Terashima Y."/>
            <person name="Suzuki O."/>
            <person name="Nakagawa S."/>
            <person name="Senoh A."/>
            <person name="Mizoguchi H."/>
            <person name="Goto Y."/>
            <person name="Shimizu F."/>
            <person name="Wakebe H."/>
            <person name="Hishigaki H."/>
            <person name="Watanabe T."/>
            <person name="Sugiyama A."/>
            <person name="Takemoto M."/>
            <person name="Kawakami B."/>
            <person name="Yamazaki M."/>
            <person name="Watanabe K."/>
            <person name="Kumagai A."/>
            <person name="Itakura S."/>
            <person name="Fukuzumi Y."/>
            <person name="Fujimori Y."/>
            <person name="Komiyama M."/>
            <person name="Tashiro H."/>
            <person name="Tanigami A."/>
            <person name="Fujiwara T."/>
            <person name="Ono T."/>
            <person name="Yamada K."/>
            <person name="Fujii Y."/>
            <person name="Ozaki K."/>
            <person name="Hirao M."/>
            <person name="Ohmori Y."/>
            <person name="Kawabata A."/>
            <person name="Hikiji T."/>
            <person name="Kobatake N."/>
            <person name="Inagaki H."/>
            <person name="Ikema Y."/>
            <person name="Okamoto S."/>
            <person name="Okitani R."/>
            <person name="Kawakami T."/>
            <person name="Noguchi S."/>
            <person name="Itoh T."/>
            <person name="Shigeta K."/>
            <person name="Senba T."/>
            <person name="Matsumura K."/>
            <person name="Nakajima Y."/>
            <person name="Mizuno T."/>
            <person name="Morinaga M."/>
            <person name="Sasaki M."/>
            <person name="Togashi T."/>
            <person name="Oyama M."/>
            <person name="Hata H."/>
            <person name="Watanabe M."/>
            <person name="Komatsu T."/>
            <person name="Mizushima-Sugano J."/>
            <person name="Satoh T."/>
            <person name="Shirai Y."/>
            <person name="Takahashi Y."/>
            <person name="Nakagawa K."/>
            <person name="Okumura K."/>
            <person name="Nagase T."/>
            <person name="Nomura N."/>
            <person name="Kikuchi H."/>
            <person name="Masuho Y."/>
            <person name="Yamashita R."/>
            <person name="Nakai K."/>
            <person name="Yada T."/>
            <person name="Nakamura Y."/>
            <person name="Ohara O."/>
            <person name="Isogai T."/>
            <person name="Sugano S."/>
        </authorList>
    </citation>
    <scope>NUCLEOTIDE SEQUENCE [LARGE SCALE MRNA] (ISOFORMS 1 AND 2)</scope>
    <source>
        <tissue>Mammary gland</tissue>
        <tissue>Placenta</tissue>
    </source>
</reference>
<reference key="4">
    <citation type="journal article" date="2006" name="Nature">
        <title>Human chromosome 11 DNA sequence and analysis including novel gene identification.</title>
        <authorList>
            <person name="Taylor T.D."/>
            <person name="Noguchi H."/>
            <person name="Totoki Y."/>
            <person name="Toyoda A."/>
            <person name="Kuroki Y."/>
            <person name="Dewar K."/>
            <person name="Lloyd C."/>
            <person name="Itoh T."/>
            <person name="Takeda T."/>
            <person name="Kim D.-W."/>
            <person name="She X."/>
            <person name="Barlow K.F."/>
            <person name="Bloom T."/>
            <person name="Bruford E."/>
            <person name="Chang J.L."/>
            <person name="Cuomo C.A."/>
            <person name="Eichler E."/>
            <person name="FitzGerald M.G."/>
            <person name="Jaffe D.B."/>
            <person name="LaButti K."/>
            <person name="Nicol R."/>
            <person name="Park H.-S."/>
            <person name="Seaman C."/>
            <person name="Sougnez C."/>
            <person name="Yang X."/>
            <person name="Zimmer A.R."/>
            <person name="Zody M.C."/>
            <person name="Birren B.W."/>
            <person name="Nusbaum C."/>
            <person name="Fujiyama A."/>
            <person name="Hattori M."/>
            <person name="Rogers J."/>
            <person name="Lander E.S."/>
            <person name="Sakaki Y."/>
        </authorList>
    </citation>
    <scope>NUCLEOTIDE SEQUENCE [LARGE SCALE GENOMIC DNA]</scope>
</reference>
<reference key="5">
    <citation type="submission" date="2005-07" db="EMBL/GenBank/DDBJ databases">
        <authorList>
            <person name="Mural R.J."/>
            <person name="Istrail S."/>
            <person name="Sutton G.G."/>
            <person name="Florea L."/>
            <person name="Halpern A.L."/>
            <person name="Mobarry C.M."/>
            <person name="Lippert R."/>
            <person name="Walenz B."/>
            <person name="Shatkay H."/>
            <person name="Dew I."/>
            <person name="Miller J.R."/>
            <person name="Flanigan M.J."/>
            <person name="Edwards N.J."/>
            <person name="Bolanos R."/>
            <person name="Fasulo D."/>
            <person name="Halldorsson B.V."/>
            <person name="Hannenhalli S."/>
            <person name="Turner R."/>
            <person name="Yooseph S."/>
            <person name="Lu F."/>
            <person name="Nusskern D.R."/>
            <person name="Shue B.C."/>
            <person name="Zheng X.H."/>
            <person name="Zhong F."/>
            <person name="Delcher A.L."/>
            <person name="Huson D.H."/>
            <person name="Kravitz S.A."/>
            <person name="Mouchard L."/>
            <person name="Reinert K."/>
            <person name="Remington K.A."/>
            <person name="Clark A.G."/>
            <person name="Waterman M.S."/>
            <person name="Eichler E.E."/>
            <person name="Adams M.D."/>
            <person name="Hunkapiller M.W."/>
            <person name="Myers E.W."/>
            <person name="Venter J.C."/>
        </authorList>
    </citation>
    <scope>NUCLEOTIDE SEQUENCE [LARGE SCALE GENOMIC DNA]</scope>
</reference>
<reference key="6">
    <citation type="journal article" date="2004" name="Genome Res.">
        <title>The status, quality, and expansion of the NIH full-length cDNA project: the Mammalian Gene Collection (MGC).</title>
        <authorList>
            <consortium name="The MGC Project Team"/>
        </authorList>
    </citation>
    <scope>NUCLEOTIDE SEQUENCE [LARGE SCALE MRNA] (ISOFORM 1)</scope>
    <scope>VARIANT SER-49</scope>
    <source>
        <tissue>Placenta</tissue>
    </source>
</reference>
<reference key="7">
    <citation type="journal article" date="2017" name="Biotechnol. Lett.">
        <title>Functional expression of a human GDP-L-fucose transporter in Escherichia coli.</title>
        <authorList>
            <person name="Foerster-Fromme K."/>
            <person name="Schneider S."/>
            <person name="Sprenger G.A."/>
            <person name="Albermann C."/>
        </authorList>
    </citation>
    <scope>FUNCTION</scope>
    <scope>TRANSPORTER ACTIVITY</scope>
    <scope>BIOPHYSICOCHEMICAL PROPERTIES</scope>
    <scope>SUBCELLULAR LOCATION</scope>
</reference>
<name>FUCT1_HUMAN</name>
<sequence>MNRAPLKRSRILHMALTGASDPSAEAEANGEKPFLLRALQIALVVSLYWVTSISMVFLNKYLLDSPSLRLDTPIFVTFYQCLVTTLLCKGLSALAACCPGAVDFPSLRLDLRVARSVLPLSVVFIGMITFNNLCLKYVGVAFYNVGRSLTTVFNVLLSYLLLKQTTSFYALLTCGIIIGGFWLGVDQEGAEGTLSWLGTVFGVLASLCVSLNAIYTTKVLPAVDGSIWRLTFYNNVNACILFLPLLLLLGELQALRDFAQLGSAHFWGMMTLGGLFGFAIGYVTGLQIKFTSPLTHNVSGTAKACAQTVLAVLYYEETKSFLWWTSNMMVLGGSSAYTWVRGWEMKKTPEEPSPKDSEKSAMGV</sequence>
<feature type="chain" id="PRO_0000213391" description="GDP-fucose transporter 1">
    <location>
        <begin position="1"/>
        <end position="364"/>
    </location>
</feature>
<feature type="transmembrane region" description="Helical" evidence="1">
    <location>
        <begin position="34"/>
        <end position="56"/>
    </location>
</feature>
<feature type="transmembrane region" description="Helical" evidence="1">
    <location>
        <begin position="76"/>
        <end position="98"/>
    </location>
</feature>
<feature type="transmembrane region" description="Helical" evidence="1">
    <location>
        <begin position="111"/>
        <end position="130"/>
    </location>
</feature>
<feature type="transmembrane region" description="Helical" evidence="1">
    <location>
        <begin position="140"/>
        <end position="162"/>
    </location>
</feature>
<feature type="transmembrane region" description="Helical" evidence="1">
    <location>
        <begin position="167"/>
        <end position="185"/>
    </location>
</feature>
<feature type="transmembrane region" description="Helical" evidence="1">
    <location>
        <begin position="195"/>
        <end position="214"/>
    </location>
</feature>
<feature type="transmembrane region" description="Helical" evidence="1">
    <location>
        <begin position="227"/>
        <end position="249"/>
    </location>
</feature>
<feature type="transmembrane region" description="Helical" evidence="1">
    <location>
        <begin position="264"/>
        <end position="286"/>
    </location>
</feature>
<feature type="splice variant" id="VSP_047116" description="In isoform 2." evidence="6">
    <location>
        <begin position="1"/>
        <end position="13"/>
    </location>
</feature>
<feature type="sequence variant" id="VAR_057302" description="In dbSNP:rs11538193." evidence="4">
    <original>W</original>
    <variation>S</variation>
    <location>
        <position position="49"/>
    </location>
</feature>
<feature type="sequence variant" id="VAR_012347" description="In CDG2C; does not rescue defective fucosylation in cells lacking GDP-fucose transport; dbSNP:rs28939087." evidence="2 3">
    <original>R</original>
    <variation>C</variation>
    <location>
        <position position="147"/>
    </location>
</feature>
<feature type="sequence variant" id="VAR_057303" description="In dbSNP:rs7130656.">
    <original>I</original>
    <variation>V</variation>
    <location>
        <position position="240"/>
    </location>
</feature>
<feature type="sequence variant" id="VAR_012348" description="In CDG2C; dbSNP:rs28937886." evidence="3">
    <original>T</original>
    <variation>R</variation>
    <location>
        <position position="308"/>
    </location>
</feature>
<feature type="sequence conflict" description="In Ref. 3; BAA92126." evidence="8" ref="3">
    <original>F</original>
    <variation>L</variation>
    <location>
        <position position="258"/>
    </location>
</feature>
<accession>Q96A29</accession>
<accession>B2RDB2</accession>
<accession>Q9BV76</accession>
<accession>Q9NUJ8</accession>
<keyword id="KW-0025">Alternative splicing</keyword>
<keyword id="KW-0900">Congenital disorder of glycosylation</keyword>
<keyword id="KW-0225">Disease variant</keyword>
<keyword id="KW-0333">Golgi apparatus</keyword>
<keyword id="KW-0472">Membrane</keyword>
<keyword id="KW-1267">Proteomics identification</keyword>
<keyword id="KW-1185">Reference proteome</keyword>
<keyword id="KW-0762">Sugar transport</keyword>
<keyword id="KW-0812">Transmembrane</keyword>
<keyword id="KW-1133">Transmembrane helix</keyword>
<keyword id="KW-0813">Transport</keyword>
<proteinExistence type="evidence at protein level"/>
<evidence type="ECO:0000255" key="1"/>
<evidence type="ECO:0000269" key="2">
    <source>
    </source>
</evidence>
<evidence type="ECO:0000269" key="3">
    <source>
    </source>
</evidence>
<evidence type="ECO:0000269" key="4">
    <source>
    </source>
</evidence>
<evidence type="ECO:0000269" key="5">
    <source>
    </source>
</evidence>
<evidence type="ECO:0000303" key="6">
    <source>
    </source>
</evidence>
<evidence type="ECO:0000303" key="7">
    <source>
    </source>
</evidence>
<evidence type="ECO:0000305" key="8"/>
<evidence type="ECO:0000305" key="9">
    <source>
    </source>
</evidence>
<evidence type="ECO:0000305" key="10">
    <source>
    </source>
</evidence>
<evidence type="ECO:0000305" key="11">
    <source>
    </source>
</evidence>
<evidence type="ECO:0000312" key="12">
    <source>
        <dbReference type="HGNC" id="HGNC:20197"/>
    </source>
</evidence>
<protein>
    <recommendedName>
        <fullName evidence="8">GDP-fucose transporter 1</fullName>
    </recommendedName>
    <alternativeName>
        <fullName>Solute carrier family 35 member C1</fullName>
    </alternativeName>
</protein>
<comment type="function">
    <text evidence="2 3 5">Antiporter specific for GDP-l-fucose and depending on the concomitant reverse transport of GMP. Involved in GDP-fucose import from the cytoplasm into the Golgi lumen.</text>
</comment>
<comment type="catalytic activity">
    <reaction evidence="3 5">
        <text>GMP(out) + GDP-beta-L-fucose(in) = GMP(in) + GDP-beta-L-fucose(out)</text>
        <dbReference type="Rhea" id="RHEA:72707"/>
        <dbReference type="ChEBI" id="CHEBI:57273"/>
        <dbReference type="ChEBI" id="CHEBI:58115"/>
    </reaction>
</comment>
<comment type="biophysicochemical properties">
    <kinetics>
        <KM evidence="5">4 uM for GDP-beta-L-fucose</KM>
        <Vmax evidence="5">8.0 pmol/min/mg enzyme</Vmax>
    </kinetics>
</comment>
<comment type="interaction">
    <interactant intactId="EBI-20841586">
        <id>Q96A29</id>
    </interactant>
    <interactant intactId="EBI-715495">
        <id>P05090</id>
        <label>APOD</label>
    </interactant>
    <organismsDiffer>false</organismsDiffer>
    <experiments>2</experiments>
</comment>
<comment type="subcellular location">
    <subcellularLocation>
        <location evidence="9 10 11">Golgi apparatus membrane</location>
        <topology evidence="1">Multi-pass membrane protein</topology>
    </subcellularLocation>
</comment>
<comment type="alternative products">
    <event type="alternative splicing"/>
    <isoform>
        <id>Q96A29-1</id>
        <name>1</name>
        <sequence type="displayed"/>
    </isoform>
    <isoform>
        <id>Q96A29-2</id>
        <name>2</name>
        <sequence type="described" ref="VSP_047116"/>
    </isoform>
</comment>
<comment type="disease" evidence="2 3">
    <disease id="DI-00348">
        <name>Congenital disorder of glycosylation 2C</name>
        <acronym>CDG2C</acronym>
        <description>A multisystem disorder caused by a defect in glycoprotein biosynthesis and characterized by under-glycosylated serum glycoproteins. Congenital disorders of glycosylation result in a wide variety of clinical features, such as defects in the nervous system development, psychomotor retardation, dysmorphic features, hypotonia, coagulation disorders, and immunodeficiency. The broad spectrum of features reflects the critical role of N-glycoproteins during embryonic development, differentiation, and maintenance of cell functions. The clinical features of CDG2C include intellectual disability, short stature, facial stigmata, and recurrent bacterial peripheral infections with persistently elevated peripheral leukocytes. Biochemically, CDG2C is characterized by a lack of fucosylated glycoconjugates, including selectin ligands.</description>
        <dbReference type="MIM" id="266265"/>
    </disease>
    <text>The disease is caused by variants affecting the gene represented in this entry.</text>
</comment>
<comment type="similarity">
    <text evidence="8">Belongs to the TPT transporter family. SLC35C subfamily.</text>
</comment>
<comment type="online information" name="SLC35C1base">
    <link uri="https://databases.lovd.nl/shared/genes/SLC35C1"/>
    <text>SLC35C1 mutation db</text>
</comment>
<organism>
    <name type="scientific">Homo sapiens</name>
    <name type="common">Human</name>
    <dbReference type="NCBI Taxonomy" id="9606"/>
    <lineage>
        <taxon>Eukaryota</taxon>
        <taxon>Metazoa</taxon>
        <taxon>Chordata</taxon>
        <taxon>Craniata</taxon>
        <taxon>Vertebrata</taxon>
        <taxon>Euteleostomi</taxon>
        <taxon>Mammalia</taxon>
        <taxon>Eutheria</taxon>
        <taxon>Euarchontoglires</taxon>
        <taxon>Primates</taxon>
        <taxon>Haplorrhini</taxon>
        <taxon>Catarrhini</taxon>
        <taxon>Hominidae</taxon>
        <taxon>Homo</taxon>
    </lineage>
</organism>
<dbReference type="EMBL" id="AF323970">
    <property type="protein sequence ID" value="AAK50397.1"/>
    <property type="molecule type" value="mRNA"/>
</dbReference>
<dbReference type="EMBL" id="AF326199">
    <property type="protein sequence ID" value="AAK51705.1"/>
    <property type="molecule type" value="mRNA"/>
</dbReference>
<dbReference type="EMBL" id="AK027394">
    <property type="protein sequence ID" value="BAB55080.1"/>
    <property type="molecule type" value="mRNA"/>
</dbReference>
<dbReference type="EMBL" id="AK002182">
    <property type="protein sequence ID" value="BAA92126.1"/>
    <property type="molecule type" value="mRNA"/>
</dbReference>
<dbReference type="EMBL" id="AK315473">
    <property type="protein sequence ID" value="BAG37859.1"/>
    <property type="molecule type" value="mRNA"/>
</dbReference>
<dbReference type="EMBL" id="AC044839">
    <property type="status" value="NOT_ANNOTATED_CDS"/>
    <property type="molecule type" value="Genomic_DNA"/>
</dbReference>
<dbReference type="EMBL" id="CH471064">
    <property type="protein sequence ID" value="EAW68031.1"/>
    <property type="molecule type" value="Genomic_DNA"/>
</dbReference>
<dbReference type="EMBL" id="BC001427">
    <property type="protein sequence ID" value="AAH01427.2"/>
    <property type="molecule type" value="mRNA"/>
</dbReference>
<dbReference type="CCDS" id="CCDS44575.1">
    <molecule id="Q96A29-2"/>
</dbReference>
<dbReference type="CCDS" id="CCDS7914.1">
    <molecule id="Q96A29-1"/>
</dbReference>
<dbReference type="RefSeq" id="NP_001138737.1">
    <molecule id="Q96A29-2"/>
    <property type="nucleotide sequence ID" value="NM_001145265.2"/>
</dbReference>
<dbReference type="RefSeq" id="NP_001138738.1">
    <molecule id="Q96A29-2"/>
    <property type="nucleotide sequence ID" value="NM_001145266.2"/>
</dbReference>
<dbReference type="RefSeq" id="NP_001412084.1">
    <molecule id="Q96A29-1"/>
    <property type="nucleotide sequence ID" value="NM_001425155.1"/>
</dbReference>
<dbReference type="RefSeq" id="NP_001412085.1">
    <molecule id="Q96A29-2"/>
    <property type="nucleotide sequence ID" value="NM_001425156.1"/>
</dbReference>
<dbReference type="RefSeq" id="NP_060859.4">
    <molecule id="Q96A29-1"/>
    <property type="nucleotide sequence ID" value="NM_018389.4"/>
</dbReference>
<dbReference type="SMR" id="Q96A29"/>
<dbReference type="BioGRID" id="120624">
    <property type="interactions" value="10"/>
</dbReference>
<dbReference type="FunCoup" id="Q96A29">
    <property type="interactions" value="615"/>
</dbReference>
<dbReference type="IntAct" id="Q96A29">
    <property type="interactions" value="6"/>
</dbReference>
<dbReference type="STRING" id="9606.ENSP00000313318"/>
<dbReference type="TCDB" id="2.A.7.16.1">
    <property type="family name" value="the drug/metabolite transporter (dmt) superfamily"/>
</dbReference>
<dbReference type="iPTMnet" id="Q96A29"/>
<dbReference type="PhosphoSitePlus" id="Q96A29"/>
<dbReference type="SwissPalm" id="Q96A29"/>
<dbReference type="BioMuta" id="SLC35C1"/>
<dbReference type="DMDM" id="20138280"/>
<dbReference type="jPOST" id="Q96A29"/>
<dbReference type="MassIVE" id="Q96A29"/>
<dbReference type="PaxDb" id="9606-ENSP00000313318"/>
<dbReference type="PeptideAtlas" id="Q96A29"/>
<dbReference type="ProteomicsDB" id="3427"/>
<dbReference type="ProteomicsDB" id="75900">
    <molecule id="Q96A29-1"/>
</dbReference>
<dbReference type="Pumba" id="Q96A29"/>
<dbReference type="Antibodypedia" id="13252">
    <property type="antibodies" value="58 antibodies from 19 providers"/>
</dbReference>
<dbReference type="DNASU" id="55343"/>
<dbReference type="Ensembl" id="ENST00000314134.4">
    <molecule id="Q96A29-1"/>
    <property type="protein sequence ID" value="ENSP00000313318.3"/>
    <property type="gene ID" value="ENSG00000181830.9"/>
</dbReference>
<dbReference type="Ensembl" id="ENST00000442528.2">
    <molecule id="Q96A29-2"/>
    <property type="protein sequence ID" value="ENSP00000412408.2"/>
    <property type="gene ID" value="ENSG00000181830.9"/>
</dbReference>
<dbReference type="Ensembl" id="ENST00000526817.2">
    <molecule id="Q96A29-2"/>
    <property type="protein sequence ID" value="ENSP00000432145.2"/>
    <property type="gene ID" value="ENSG00000181830.9"/>
</dbReference>
<dbReference type="GeneID" id="55343"/>
<dbReference type="KEGG" id="hsa:55343"/>
<dbReference type="MANE-Select" id="ENST00000314134.4">
    <property type="protein sequence ID" value="ENSP00000313318.3"/>
    <property type="RefSeq nucleotide sequence ID" value="NM_018389.5"/>
    <property type="RefSeq protein sequence ID" value="NP_060859.4"/>
</dbReference>
<dbReference type="UCSC" id="uc001nbo.4">
    <molecule id="Q96A29-1"/>
    <property type="organism name" value="human"/>
</dbReference>
<dbReference type="AGR" id="HGNC:20197"/>
<dbReference type="CTD" id="55343"/>
<dbReference type="DisGeNET" id="55343"/>
<dbReference type="GeneCards" id="SLC35C1"/>
<dbReference type="HGNC" id="HGNC:20197">
    <property type="gene designation" value="SLC35C1"/>
</dbReference>
<dbReference type="HPA" id="ENSG00000181830">
    <property type="expression patterns" value="Tissue enhanced (liver)"/>
</dbReference>
<dbReference type="MalaCards" id="SLC35C1"/>
<dbReference type="MIM" id="266265">
    <property type="type" value="phenotype"/>
</dbReference>
<dbReference type="MIM" id="605881">
    <property type="type" value="gene"/>
</dbReference>
<dbReference type="neXtProt" id="NX_Q96A29"/>
<dbReference type="OpenTargets" id="ENSG00000181830"/>
<dbReference type="Orphanet" id="99843">
    <property type="disease" value="Leukocyte adhesion deficiency type II"/>
</dbReference>
<dbReference type="PharmGKB" id="PA134930330"/>
<dbReference type="VEuPathDB" id="HostDB:ENSG00000181830"/>
<dbReference type="eggNOG" id="KOG1442">
    <property type="taxonomic scope" value="Eukaryota"/>
</dbReference>
<dbReference type="GeneTree" id="ENSGT00390000013315"/>
<dbReference type="HOGENOM" id="CLU_044894_1_0_1"/>
<dbReference type="InParanoid" id="Q96A29"/>
<dbReference type="OMA" id="WWTSNIV"/>
<dbReference type="OrthoDB" id="5547497at2759"/>
<dbReference type="PAN-GO" id="Q96A29">
    <property type="GO annotations" value="5 GO annotations based on evolutionary models"/>
</dbReference>
<dbReference type="PhylomeDB" id="Q96A29"/>
<dbReference type="TreeFam" id="TF354269"/>
<dbReference type="PathwayCommons" id="Q96A29"/>
<dbReference type="Reactome" id="R-HSA-5619078">
    <property type="pathway name" value="Defective SLC35C1 causes congenital disorder of glycosylation 2C (CDG2C)"/>
</dbReference>
<dbReference type="Reactome" id="R-HSA-6787639">
    <property type="pathway name" value="GDP-fucose biosynthesis"/>
</dbReference>
<dbReference type="Reactome" id="R-HSA-727802">
    <property type="pathway name" value="Transport of nucleotide sugars"/>
</dbReference>
<dbReference type="SignaLink" id="Q96A29"/>
<dbReference type="BioGRID-ORCS" id="55343">
    <property type="hits" value="31 hits in 1155 CRISPR screens"/>
</dbReference>
<dbReference type="ChiTaRS" id="SLC35C1">
    <property type="organism name" value="human"/>
</dbReference>
<dbReference type="GeneWiki" id="SLC35C1"/>
<dbReference type="GenomeRNAi" id="55343"/>
<dbReference type="Pharos" id="Q96A29">
    <property type="development level" value="Tbio"/>
</dbReference>
<dbReference type="PRO" id="PR:Q96A29"/>
<dbReference type="Proteomes" id="UP000005640">
    <property type="component" value="Chromosome 11"/>
</dbReference>
<dbReference type="RNAct" id="Q96A29">
    <property type="molecule type" value="protein"/>
</dbReference>
<dbReference type="Bgee" id="ENSG00000181830">
    <property type="expression patterns" value="Expressed in lower esophagus mucosa and 175 other cell types or tissues"/>
</dbReference>
<dbReference type="ExpressionAtlas" id="Q96A29">
    <property type="expression patterns" value="baseline and differential"/>
</dbReference>
<dbReference type="GO" id="GO:0005794">
    <property type="term" value="C:Golgi apparatus"/>
    <property type="evidence" value="ECO:0000314"/>
    <property type="project" value="HPA"/>
</dbReference>
<dbReference type="GO" id="GO:0000139">
    <property type="term" value="C:Golgi membrane"/>
    <property type="evidence" value="ECO:0000314"/>
    <property type="project" value="UniProtKB"/>
</dbReference>
<dbReference type="GO" id="GO:0015297">
    <property type="term" value="F:antiporter activity"/>
    <property type="evidence" value="ECO:0000318"/>
    <property type="project" value="GO_Central"/>
</dbReference>
<dbReference type="GO" id="GO:0005457">
    <property type="term" value="F:GDP-fucose transmembrane transporter activity"/>
    <property type="evidence" value="ECO:0000314"/>
    <property type="project" value="UniProtKB"/>
</dbReference>
<dbReference type="GO" id="GO:0042351">
    <property type="term" value="P:'de novo' GDP-L-fucose biosynthetic process"/>
    <property type="evidence" value="ECO:0007669"/>
    <property type="project" value="Ensembl"/>
</dbReference>
<dbReference type="GO" id="GO:0036085">
    <property type="term" value="P:GDP-fucose import into Golgi lumen"/>
    <property type="evidence" value="ECO:0000314"/>
    <property type="project" value="UniProtKB"/>
</dbReference>
<dbReference type="GO" id="GO:0042350">
    <property type="term" value="P:GDP-L-fucose biosynthetic process"/>
    <property type="evidence" value="ECO:0000304"/>
    <property type="project" value="Reactome"/>
</dbReference>
<dbReference type="GO" id="GO:0042352">
    <property type="term" value="P:GDP-L-fucose salvage"/>
    <property type="evidence" value="ECO:0007669"/>
    <property type="project" value="Ensembl"/>
</dbReference>
<dbReference type="GO" id="GO:0030259">
    <property type="term" value="P:lipid glycosylation"/>
    <property type="evidence" value="ECO:0007669"/>
    <property type="project" value="Ensembl"/>
</dbReference>
<dbReference type="GO" id="GO:0045746">
    <property type="term" value="P:negative regulation of Notch signaling pathway"/>
    <property type="evidence" value="ECO:0007669"/>
    <property type="project" value="Ensembl"/>
</dbReference>
<dbReference type="InterPro" id="IPR004853">
    <property type="entry name" value="Sugar_P_trans_dom"/>
</dbReference>
<dbReference type="InterPro" id="IPR050186">
    <property type="entry name" value="TPT_transporter"/>
</dbReference>
<dbReference type="PANTHER" id="PTHR11132">
    <property type="entry name" value="SOLUTE CARRIER FAMILY 35"/>
    <property type="match status" value="1"/>
</dbReference>
<dbReference type="Pfam" id="PF03151">
    <property type="entry name" value="TPT"/>
    <property type="match status" value="1"/>
</dbReference>